<feature type="chain" id="PRO_0000347702" description="Alanine--tRNA ligase">
    <location>
        <begin position="1"/>
        <end position="862"/>
    </location>
</feature>
<feature type="binding site" evidence="1">
    <location>
        <position position="552"/>
    </location>
    <ligand>
        <name>Zn(2+)</name>
        <dbReference type="ChEBI" id="CHEBI:29105"/>
    </ligand>
</feature>
<feature type="binding site" evidence="1">
    <location>
        <position position="556"/>
    </location>
    <ligand>
        <name>Zn(2+)</name>
        <dbReference type="ChEBI" id="CHEBI:29105"/>
    </ligand>
</feature>
<feature type="binding site" evidence="1">
    <location>
        <position position="653"/>
    </location>
    <ligand>
        <name>Zn(2+)</name>
        <dbReference type="ChEBI" id="CHEBI:29105"/>
    </ligand>
</feature>
<feature type="binding site" evidence="1">
    <location>
        <position position="657"/>
    </location>
    <ligand>
        <name>Zn(2+)</name>
        <dbReference type="ChEBI" id="CHEBI:29105"/>
    </ligand>
</feature>
<keyword id="KW-0030">Aminoacyl-tRNA synthetase</keyword>
<keyword id="KW-0067">ATP-binding</keyword>
<keyword id="KW-0963">Cytoplasm</keyword>
<keyword id="KW-0436">Ligase</keyword>
<keyword id="KW-0479">Metal-binding</keyword>
<keyword id="KW-0547">Nucleotide-binding</keyword>
<keyword id="KW-0648">Protein biosynthesis</keyword>
<keyword id="KW-1185">Reference proteome</keyword>
<keyword id="KW-0694">RNA-binding</keyword>
<keyword id="KW-0820">tRNA-binding</keyword>
<keyword id="KW-0862">Zinc</keyword>
<proteinExistence type="inferred from homology"/>
<dbReference type="EC" id="6.1.1.7" evidence="1"/>
<dbReference type="EMBL" id="CP000103">
    <property type="protein sequence ID" value="ABB73331.1"/>
    <property type="molecule type" value="Genomic_DNA"/>
</dbReference>
<dbReference type="RefSeq" id="WP_011379386.1">
    <property type="nucleotide sequence ID" value="NC_007614.1"/>
</dbReference>
<dbReference type="SMR" id="Q2YD40"/>
<dbReference type="STRING" id="323848.Nmul_A0022"/>
<dbReference type="KEGG" id="nmu:Nmul_A0022"/>
<dbReference type="eggNOG" id="COG0013">
    <property type="taxonomic scope" value="Bacteria"/>
</dbReference>
<dbReference type="HOGENOM" id="CLU_004485_1_1_4"/>
<dbReference type="OrthoDB" id="9803884at2"/>
<dbReference type="Proteomes" id="UP000002718">
    <property type="component" value="Chromosome"/>
</dbReference>
<dbReference type="GO" id="GO:0005829">
    <property type="term" value="C:cytosol"/>
    <property type="evidence" value="ECO:0007669"/>
    <property type="project" value="TreeGrafter"/>
</dbReference>
<dbReference type="GO" id="GO:0004813">
    <property type="term" value="F:alanine-tRNA ligase activity"/>
    <property type="evidence" value="ECO:0007669"/>
    <property type="project" value="UniProtKB-UniRule"/>
</dbReference>
<dbReference type="GO" id="GO:0002161">
    <property type="term" value="F:aminoacyl-tRNA deacylase activity"/>
    <property type="evidence" value="ECO:0007669"/>
    <property type="project" value="TreeGrafter"/>
</dbReference>
<dbReference type="GO" id="GO:0005524">
    <property type="term" value="F:ATP binding"/>
    <property type="evidence" value="ECO:0007669"/>
    <property type="project" value="UniProtKB-UniRule"/>
</dbReference>
<dbReference type="GO" id="GO:0000049">
    <property type="term" value="F:tRNA binding"/>
    <property type="evidence" value="ECO:0007669"/>
    <property type="project" value="UniProtKB-KW"/>
</dbReference>
<dbReference type="GO" id="GO:0008270">
    <property type="term" value="F:zinc ion binding"/>
    <property type="evidence" value="ECO:0007669"/>
    <property type="project" value="UniProtKB-UniRule"/>
</dbReference>
<dbReference type="GO" id="GO:0006419">
    <property type="term" value="P:alanyl-tRNA aminoacylation"/>
    <property type="evidence" value="ECO:0007669"/>
    <property type="project" value="UniProtKB-UniRule"/>
</dbReference>
<dbReference type="GO" id="GO:0045892">
    <property type="term" value="P:negative regulation of DNA-templated transcription"/>
    <property type="evidence" value="ECO:0007669"/>
    <property type="project" value="TreeGrafter"/>
</dbReference>
<dbReference type="CDD" id="cd00673">
    <property type="entry name" value="AlaRS_core"/>
    <property type="match status" value="1"/>
</dbReference>
<dbReference type="FunFam" id="2.40.30.130:FF:000001">
    <property type="entry name" value="Alanine--tRNA ligase"/>
    <property type="match status" value="1"/>
</dbReference>
<dbReference type="FunFam" id="3.10.310.40:FF:000001">
    <property type="entry name" value="Alanine--tRNA ligase"/>
    <property type="match status" value="1"/>
</dbReference>
<dbReference type="FunFam" id="3.30.54.20:FF:000001">
    <property type="entry name" value="Alanine--tRNA ligase"/>
    <property type="match status" value="1"/>
</dbReference>
<dbReference type="FunFam" id="3.30.930.10:FF:000004">
    <property type="entry name" value="Alanine--tRNA ligase"/>
    <property type="match status" value="1"/>
</dbReference>
<dbReference type="FunFam" id="3.30.980.10:FF:000004">
    <property type="entry name" value="Alanine--tRNA ligase, cytoplasmic"/>
    <property type="match status" value="1"/>
</dbReference>
<dbReference type="Gene3D" id="2.40.30.130">
    <property type="match status" value="1"/>
</dbReference>
<dbReference type="Gene3D" id="3.10.310.40">
    <property type="match status" value="1"/>
</dbReference>
<dbReference type="Gene3D" id="3.30.54.20">
    <property type="match status" value="1"/>
</dbReference>
<dbReference type="Gene3D" id="6.10.250.550">
    <property type="match status" value="1"/>
</dbReference>
<dbReference type="Gene3D" id="3.30.930.10">
    <property type="entry name" value="Bira Bifunctional Protein, Domain 2"/>
    <property type="match status" value="1"/>
</dbReference>
<dbReference type="Gene3D" id="3.30.980.10">
    <property type="entry name" value="Threonyl-trna Synthetase, Chain A, domain 2"/>
    <property type="match status" value="1"/>
</dbReference>
<dbReference type="HAMAP" id="MF_00036_B">
    <property type="entry name" value="Ala_tRNA_synth_B"/>
    <property type="match status" value="1"/>
</dbReference>
<dbReference type="InterPro" id="IPR045864">
    <property type="entry name" value="aa-tRNA-synth_II/BPL/LPL"/>
</dbReference>
<dbReference type="InterPro" id="IPR002318">
    <property type="entry name" value="Ala-tRNA-lgiase_IIc"/>
</dbReference>
<dbReference type="InterPro" id="IPR018162">
    <property type="entry name" value="Ala-tRNA-ligase_IIc_anticod-bd"/>
</dbReference>
<dbReference type="InterPro" id="IPR018165">
    <property type="entry name" value="Ala-tRNA-synth_IIc_core"/>
</dbReference>
<dbReference type="InterPro" id="IPR018164">
    <property type="entry name" value="Ala-tRNA-synth_IIc_N"/>
</dbReference>
<dbReference type="InterPro" id="IPR050058">
    <property type="entry name" value="Ala-tRNA_ligase"/>
</dbReference>
<dbReference type="InterPro" id="IPR023033">
    <property type="entry name" value="Ala_tRNA_ligase_euk/bac"/>
</dbReference>
<dbReference type="InterPro" id="IPR003156">
    <property type="entry name" value="DHHA1_dom"/>
</dbReference>
<dbReference type="InterPro" id="IPR018163">
    <property type="entry name" value="Thr/Ala-tRNA-synth_IIc_edit"/>
</dbReference>
<dbReference type="InterPro" id="IPR009000">
    <property type="entry name" value="Transl_B-barrel_sf"/>
</dbReference>
<dbReference type="InterPro" id="IPR012947">
    <property type="entry name" value="tRNA_SAD"/>
</dbReference>
<dbReference type="NCBIfam" id="TIGR00344">
    <property type="entry name" value="alaS"/>
    <property type="match status" value="1"/>
</dbReference>
<dbReference type="PANTHER" id="PTHR11777:SF9">
    <property type="entry name" value="ALANINE--TRNA LIGASE, CYTOPLASMIC"/>
    <property type="match status" value="1"/>
</dbReference>
<dbReference type="PANTHER" id="PTHR11777">
    <property type="entry name" value="ALANYL-TRNA SYNTHETASE"/>
    <property type="match status" value="1"/>
</dbReference>
<dbReference type="Pfam" id="PF02272">
    <property type="entry name" value="DHHA1"/>
    <property type="match status" value="1"/>
</dbReference>
<dbReference type="Pfam" id="PF01411">
    <property type="entry name" value="tRNA-synt_2c"/>
    <property type="match status" value="1"/>
</dbReference>
<dbReference type="Pfam" id="PF07973">
    <property type="entry name" value="tRNA_SAD"/>
    <property type="match status" value="1"/>
</dbReference>
<dbReference type="PRINTS" id="PR00980">
    <property type="entry name" value="TRNASYNTHALA"/>
</dbReference>
<dbReference type="SMART" id="SM00863">
    <property type="entry name" value="tRNA_SAD"/>
    <property type="match status" value="1"/>
</dbReference>
<dbReference type="SUPFAM" id="SSF55681">
    <property type="entry name" value="Class II aaRS and biotin synthetases"/>
    <property type="match status" value="1"/>
</dbReference>
<dbReference type="SUPFAM" id="SSF101353">
    <property type="entry name" value="Putative anticodon-binding domain of alanyl-tRNA synthetase (AlaRS)"/>
    <property type="match status" value="1"/>
</dbReference>
<dbReference type="SUPFAM" id="SSF55186">
    <property type="entry name" value="ThrRS/AlaRS common domain"/>
    <property type="match status" value="1"/>
</dbReference>
<dbReference type="SUPFAM" id="SSF50447">
    <property type="entry name" value="Translation proteins"/>
    <property type="match status" value="1"/>
</dbReference>
<dbReference type="PROSITE" id="PS50860">
    <property type="entry name" value="AA_TRNA_LIGASE_II_ALA"/>
    <property type="match status" value="1"/>
</dbReference>
<organism>
    <name type="scientific">Nitrosospira multiformis (strain ATCC 25196 / NCIMB 11849 / C 71)</name>
    <dbReference type="NCBI Taxonomy" id="323848"/>
    <lineage>
        <taxon>Bacteria</taxon>
        <taxon>Pseudomonadati</taxon>
        <taxon>Pseudomonadota</taxon>
        <taxon>Betaproteobacteria</taxon>
        <taxon>Nitrosomonadales</taxon>
        <taxon>Nitrosomonadaceae</taxon>
        <taxon>Nitrosospira</taxon>
    </lineage>
</organism>
<name>SYA_NITMU</name>
<sequence>MKSSEVRQKFLEFFETHGHTIVPSSPLVPGNDPTLLFTNAGMVQFKDVFLGQDKRPYVRAASAQRCVRAGGKHNDLENVGYTARHHTFFEMLGNFSFGDYFKRNAIRFAWEFLTDILKIPRERLWITVYAEDDEAADIWLNEVGIDSSRFTRIATQDNFWQMGDTGPCGPCSEIFYDHGPEIPGGPPGTPNADGDRYVEIWNLVFMQYNRDSAGTLHPLPRPSVDTGMGLERISAVMQQVHSNYEIDLFQQLIKAAARATNTTDLSSSSLNVIADHIRACSFLIADGVIPGNEGRGYVLRRIIRRAIRHGYKLGQKQPFFHQLVEDLASVMGQAYPELMEAKTRVSAVLKQEEERFAETLENGMQVLEAALRRGDRMLDGETLFRLYDTFGFPLDLTADIARERGIAIDEAGFDQAMEQQRERARTTSKFIMQEAIAYSGPSTTFHGYESLRQEGQVLAIYKEGSRVEFIEAGDEAVIVLDKTPFYAESGGQVGDSGELLAANGTFAVADTQKIQADVFGHKGLLRSGRLATGDAVLAEVDRAARARTERNHSVTHLMHKALREVLGHHVQQKGSLVDANKTRFDFAHNQPVTDAEIRKVEMLVNAEILANAATEARMMAIEDAKKSGAMMLFGEKYSDEVRVLDIGTSRELCGGTHVKRTGDIGLFKIVAESGVAAGVRRVEAVTGERALTYIQEQELQLQRVAAAVKAQPQDAAARITQILDNVKHLERELGRMKSKLASSQGDDFADRVREIKGVKVLAVCLEEADPKTLREAVDKFKNKFKSCVTVLAAVEDGKVKLIAGVTSDLTARLKAGDLVNFVAQQVGGKGGGRADLAQAGGTVPDSLPAALESVASWVEQHL</sequence>
<evidence type="ECO:0000255" key="1">
    <source>
        <dbReference type="HAMAP-Rule" id="MF_00036"/>
    </source>
</evidence>
<accession>Q2YD40</accession>
<protein>
    <recommendedName>
        <fullName evidence="1">Alanine--tRNA ligase</fullName>
        <ecNumber evidence="1">6.1.1.7</ecNumber>
    </recommendedName>
    <alternativeName>
        <fullName evidence="1">Alanyl-tRNA synthetase</fullName>
        <shortName evidence="1">AlaRS</shortName>
    </alternativeName>
</protein>
<reference key="1">
    <citation type="submission" date="2005-08" db="EMBL/GenBank/DDBJ databases">
        <title>Complete sequence of chromosome 1 of Nitrosospira multiformis ATCC 25196.</title>
        <authorList>
            <person name="Copeland A."/>
            <person name="Lucas S."/>
            <person name="Lapidus A."/>
            <person name="Barry K."/>
            <person name="Detter J.C."/>
            <person name="Glavina T."/>
            <person name="Hammon N."/>
            <person name="Israni S."/>
            <person name="Pitluck S."/>
            <person name="Chain P."/>
            <person name="Malfatti S."/>
            <person name="Shin M."/>
            <person name="Vergez L."/>
            <person name="Schmutz J."/>
            <person name="Larimer F."/>
            <person name="Land M."/>
            <person name="Hauser L."/>
            <person name="Kyrpides N."/>
            <person name="Lykidis A."/>
            <person name="Richardson P."/>
        </authorList>
    </citation>
    <scope>NUCLEOTIDE SEQUENCE [LARGE SCALE GENOMIC DNA]</scope>
    <source>
        <strain>ATCC 25196 / NCIMB 11849 / C 71</strain>
    </source>
</reference>
<gene>
    <name evidence="1" type="primary">alaS</name>
    <name type="ordered locus">Nmul_A0022</name>
</gene>
<comment type="function">
    <text evidence="1">Catalyzes the attachment of alanine to tRNA(Ala) in a two-step reaction: alanine is first activated by ATP to form Ala-AMP and then transferred to the acceptor end of tRNA(Ala). Also edits incorrectly charged Ser-tRNA(Ala) and Gly-tRNA(Ala) via its editing domain.</text>
</comment>
<comment type="catalytic activity">
    <reaction evidence="1">
        <text>tRNA(Ala) + L-alanine + ATP = L-alanyl-tRNA(Ala) + AMP + diphosphate</text>
        <dbReference type="Rhea" id="RHEA:12540"/>
        <dbReference type="Rhea" id="RHEA-COMP:9657"/>
        <dbReference type="Rhea" id="RHEA-COMP:9923"/>
        <dbReference type="ChEBI" id="CHEBI:30616"/>
        <dbReference type="ChEBI" id="CHEBI:33019"/>
        <dbReference type="ChEBI" id="CHEBI:57972"/>
        <dbReference type="ChEBI" id="CHEBI:78442"/>
        <dbReference type="ChEBI" id="CHEBI:78497"/>
        <dbReference type="ChEBI" id="CHEBI:456215"/>
        <dbReference type="EC" id="6.1.1.7"/>
    </reaction>
</comment>
<comment type="cofactor">
    <cofactor evidence="1">
        <name>Zn(2+)</name>
        <dbReference type="ChEBI" id="CHEBI:29105"/>
    </cofactor>
    <text evidence="1">Binds 1 zinc ion per subunit.</text>
</comment>
<comment type="subcellular location">
    <subcellularLocation>
        <location evidence="1">Cytoplasm</location>
    </subcellularLocation>
</comment>
<comment type="domain">
    <text evidence="1">Consists of three domains; the N-terminal catalytic domain, the editing domain and the C-terminal C-Ala domain. The editing domain removes incorrectly charged amino acids, while the C-Ala domain, along with tRNA(Ala), serves as a bridge to cooperatively bring together the editing and aminoacylation centers thus stimulating deacylation of misacylated tRNAs.</text>
</comment>
<comment type="similarity">
    <text evidence="1">Belongs to the class-II aminoacyl-tRNA synthetase family.</text>
</comment>